<evidence type="ECO:0000255" key="1">
    <source>
        <dbReference type="HAMAP-Rule" id="MF_00083"/>
    </source>
</evidence>
<sequence>MKLIVGLGNPGAKYRFTRHNAGFMVVDRLAGAAGTTVNRRRCFSLVGEGRLNGVRVVLAKPQTYMNLSGLAVSALCRHYRLELADLLVICDDLDLEFGRIRLRPKGGSGGHRGLASIIAALGSSDFPRVRIGIGKAEDASAHVLGEFAPEDQSGLEEILSTAALAAACACREGLDEAMSRFNSWRLMSANGTAEV</sequence>
<comment type="function">
    <text evidence="1">Hydrolyzes ribosome-free peptidyl-tRNAs (with 1 or more amino acids incorporated), which drop off the ribosome during protein synthesis, or as a result of ribosome stalling.</text>
</comment>
<comment type="function">
    <text evidence="1">Catalyzes the release of premature peptidyl moieties from peptidyl-tRNA molecules trapped in stalled 50S ribosomal subunits, and thus maintains levels of free tRNAs and 50S ribosomes.</text>
</comment>
<comment type="catalytic activity">
    <reaction evidence="1">
        <text>an N-acyl-L-alpha-aminoacyl-tRNA + H2O = an N-acyl-L-amino acid + a tRNA + H(+)</text>
        <dbReference type="Rhea" id="RHEA:54448"/>
        <dbReference type="Rhea" id="RHEA-COMP:10123"/>
        <dbReference type="Rhea" id="RHEA-COMP:13883"/>
        <dbReference type="ChEBI" id="CHEBI:15377"/>
        <dbReference type="ChEBI" id="CHEBI:15378"/>
        <dbReference type="ChEBI" id="CHEBI:59874"/>
        <dbReference type="ChEBI" id="CHEBI:78442"/>
        <dbReference type="ChEBI" id="CHEBI:138191"/>
        <dbReference type="EC" id="3.1.1.29"/>
    </reaction>
</comment>
<comment type="subunit">
    <text evidence="1">Monomer.</text>
</comment>
<comment type="subcellular location">
    <subcellularLocation>
        <location evidence="1">Cytoplasm</location>
    </subcellularLocation>
</comment>
<comment type="similarity">
    <text evidence="1">Belongs to the PTH family.</text>
</comment>
<reference key="1">
    <citation type="submission" date="2007-10" db="EMBL/GenBank/DDBJ databases">
        <title>Complete sequence of chromosome of Desulforudis audaxviator MP104C.</title>
        <authorList>
            <person name="Copeland A."/>
            <person name="Lucas S."/>
            <person name="Lapidus A."/>
            <person name="Barry K."/>
            <person name="Glavina del Rio T."/>
            <person name="Dalin E."/>
            <person name="Tice H."/>
            <person name="Bruce D."/>
            <person name="Pitluck S."/>
            <person name="Lowry S.R."/>
            <person name="Larimer F."/>
            <person name="Land M.L."/>
            <person name="Hauser L."/>
            <person name="Kyrpides N."/>
            <person name="Ivanova N.N."/>
            <person name="Richardson P."/>
        </authorList>
    </citation>
    <scope>NUCLEOTIDE SEQUENCE [LARGE SCALE GENOMIC DNA]</scope>
    <source>
        <strain>MP104C</strain>
    </source>
</reference>
<protein>
    <recommendedName>
        <fullName evidence="1">Peptidyl-tRNA hydrolase</fullName>
        <shortName evidence="1">Pth</shortName>
        <ecNumber evidence="1">3.1.1.29</ecNumber>
    </recommendedName>
</protein>
<keyword id="KW-0963">Cytoplasm</keyword>
<keyword id="KW-0378">Hydrolase</keyword>
<keyword id="KW-1185">Reference proteome</keyword>
<keyword id="KW-0694">RNA-binding</keyword>
<keyword id="KW-0820">tRNA-binding</keyword>
<name>PTH_DESAP</name>
<accession>B1I197</accession>
<organism>
    <name type="scientific">Desulforudis audaxviator (strain MP104C)</name>
    <dbReference type="NCBI Taxonomy" id="477974"/>
    <lineage>
        <taxon>Bacteria</taxon>
        <taxon>Bacillati</taxon>
        <taxon>Bacillota</taxon>
        <taxon>Clostridia</taxon>
        <taxon>Thermoanaerobacterales</taxon>
        <taxon>Candidatus Desulforudaceae</taxon>
        <taxon>Candidatus Desulforudis</taxon>
    </lineage>
</organism>
<proteinExistence type="inferred from homology"/>
<feature type="chain" id="PRO_1000092936" description="Peptidyl-tRNA hydrolase">
    <location>
        <begin position="1"/>
        <end position="195"/>
    </location>
</feature>
<feature type="active site" description="Proton acceptor" evidence="1">
    <location>
        <position position="19"/>
    </location>
</feature>
<feature type="binding site" evidence="1">
    <location>
        <position position="14"/>
    </location>
    <ligand>
        <name>tRNA</name>
        <dbReference type="ChEBI" id="CHEBI:17843"/>
    </ligand>
</feature>
<feature type="binding site" evidence="1">
    <location>
        <position position="64"/>
    </location>
    <ligand>
        <name>tRNA</name>
        <dbReference type="ChEBI" id="CHEBI:17843"/>
    </ligand>
</feature>
<feature type="binding site" evidence="1">
    <location>
        <position position="66"/>
    </location>
    <ligand>
        <name>tRNA</name>
        <dbReference type="ChEBI" id="CHEBI:17843"/>
    </ligand>
</feature>
<feature type="site" description="Discriminates between blocked and unblocked aminoacyl-tRNA" evidence="1">
    <location>
        <position position="9"/>
    </location>
</feature>
<feature type="site" description="Stabilizes the basic form of H active site to accept a proton" evidence="1">
    <location>
        <position position="91"/>
    </location>
</feature>
<gene>
    <name evidence="1" type="primary">pth</name>
    <name type="ordered locus">Daud_0071</name>
</gene>
<dbReference type="EC" id="3.1.1.29" evidence="1"/>
<dbReference type="EMBL" id="CP000860">
    <property type="protein sequence ID" value="ACA58639.1"/>
    <property type="molecule type" value="Genomic_DNA"/>
</dbReference>
<dbReference type="RefSeq" id="WP_012301233.1">
    <property type="nucleotide sequence ID" value="NC_010424.1"/>
</dbReference>
<dbReference type="SMR" id="B1I197"/>
<dbReference type="STRING" id="477974.Daud_0071"/>
<dbReference type="KEGG" id="dau:Daud_0071"/>
<dbReference type="eggNOG" id="COG0193">
    <property type="taxonomic scope" value="Bacteria"/>
</dbReference>
<dbReference type="HOGENOM" id="CLU_062456_4_1_9"/>
<dbReference type="OrthoDB" id="9800507at2"/>
<dbReference type="Proteomes" id="UP000008544">
    <property type="component" value="Chromosome"/>
</dbReference>
<dbReference type="GO" id="GO:0005737">
    <property type="term" value="C:cytoplasm"/>
    <property type="evidence" value="ECO:0007669"/>
    <property type="project" value="UniProtKB-SubCell"/>
</dbReference>
<dbReference type="GO" id="GO:0004045">
    <property type="term" value="F:peptidyl-tRNA hydrolase activity"/>
    <property type="evidence" value="ECO:0007669"/>
    <property type="project" value="UniProtKB-UniRule"/>
</dbReference>
<dbReference type="GO" id="GO:0000049">
    <property type="term" value="F:tRNA binding"/>
    <property type="evidence" value="ECO:0007669"/>
    <property type="project" value="UniProtKB-UniRule"/>
</dbReference>
<dbReference type="GO" id="GO:0006515">
    <property type="term" value="P:protein quality control for misfolded or incompletely synthesized proteins"/>
    <property type="evidence" value="ECO:0007669"/>
    <property type="project" value="UniProtKB-UniRule"/>
</dbReference>
<dbReference type="GO" id="GO:0072344">
    <property type="term" value="P:rescue of stalled ribosome"/>
    <property type="evidence" value="ECO:0007669"/>
    <property type="project" value="UniProtKB-UniRule"/>
</dbReference>
<dbReference type="CDD" id="cd00462">
    <property type="entry name" value="PTH"/>
    <property type="match status" value="1"/>
</dbReference>
<dbReference type="FunFam" id="3.40.50.1470:FF:000001">
    <property type="entry name" value="Peptidyl-tRNA hydrolase"/>
    <property type="match status" value="1"/>
</dbReference>
<dbReference type="Gene3D" id="3.40.50.1470">
    <property type="entry name" value="Peptidyl-tRNA hydrolase"/>
    <property type="match status" value="1"/>
</dbReference>
<dbReference type="HAMAP" id="MF_00083">
    <property type="entry name" value="Pept_tRNA_hydro_bact"/>
    <property type="match status" value="1"/>
</dbReference>
<dbReference type="InterPro" id="IPR001328">
    <property type="entry name" value="Pept_tRNA_hydro"/>
</dbReference>
<dbReference type="InterPro" id="IPR018171">
    <property type="entry name" value="Pept_tRNA_hydro_CS"/>
</dbReference>
<dbReference type="InterPro" id="IPR036416">
    <property type="entry name" value="Pept_tRNA_hydro_sf"/>
</dbReference>
<dbReference type="NCBIfam" id="TIGR00447">
    <property type="entry name" value="pth"/>
    <property type="match status" value="1"/>
</dbReference>
<dbReference type="PANTHER" id="PTHR17224">
    <property type="entry name" value="PEPTIDYL-TRNA HYDROLASE"/>
    <property type="match status" value="1"/>
</dbReference>
<dbReference type="PANTHER" id="PTHR17224:SF1">
    <property type="entry name" value="PEPTIDYL-TRNA HYDROLASE"/>
    <property type="match status" value="1"/>
</dbReference>
<dbReference type="Pfam" id="PF01195">
    <property type="entry name" value="Pept_tRNA_hydro"/>
    <property type="match status" value="1"/>
</dbReference>
<dbReference type="SUPFAM" id="SSF53178">
    <property type="entry name" value="Peptidyl-tRNA hydrolase-like"/>
    <property type="match status" value="1"/>
</dbReference>
<dbReference type="PROSITE" id="PS01195">
    <property type="entry name" value="PEPT_TRNA_HYDROL_1"/>
    <property type="match status" value="1"/>
</dbReference>